<name>IDI_ECOK1</name>
<reference key="1">
    <citation type="journal article" date="2007" name="J. Bacteriol.">
        <title>The genome sequence of avian pathogenic Escherichia coli strain O1:K1:H7 shares strong similarities with human extraintestinal pathogenic E. coli genomes.</title>
        <authorList>
            <person name="Johnson T.J."/>
            <person name="Kariyawasam S."/>
            <person name="Wannemuehler Y."/>
            <person name="Mangiamele P."/>
            <person name="Johnson S.J."/>
            <person name="Doetkott C."/>
            <person name="Skyberg J.A."/>
            <person name="Lynne A.M."/>
            <person name="Johnson J.R."/>
            <person name="Nolan L.K."/>
        </authorList>
    </citation>
    <scope>NUCLEOTIDE SEQUENCE [LARGE SCALE GENOMIC DNA]</scope>
</reference>
<protein>
    <recommendedName>
        <fullName evidence="1">Isopentenyl-diphosphate Delta-isomerase</fullName>
        <shortName evidence="1">IPP isomerase</shortName>
        <ecNumber evidence="1">5.3.3.2</ecNumber>
    </recommendedName>
    <alternativeName>
        <fullName evidence="1">IPP:DMAPP isomerase</fullName>
    </alternativeName>
    <alternativeName>
        <fullName evidence="1">Isopentenyl pyrophosphate isomerase</fullName>
    </alternativeName>
</protein>
<keyword id="KW-0963">Cytoplasm</keyword>
<keyword id="KW-0413">Isomerase</keyword>
<keyword id="KW-0414">Isoprene biosynthesis</keyword>
<keyword id="KW-0460">Magnesium</keyword>
<keyword id="KW-0464">Manganese</keyword>
<keyword id="KW-0479">Metal-binding</keyword>
<keyword id="KW-1185">Reference proteome</keyword>
<sequence>MQTEHVILLNAQGVPTGTLEKYAAHTADTLLHLAFSSWLFNAKGQLLVTRRALSKKAWPGVWTNSVCGHPQLGESNEEAVIRRCRYELGVEITPPESIYPDFRYRATDPNGIVENEVCPVFAARTTSALQINDDEVMDYQWCDLAAVLRGIDATPWAFSPWMVMQATNREARKRLSAFTQLK</sequence>
<feature type="chain" id="PRO_1000012168" description="Isopentenyl-diphosphate Delta-isomerase">
    <location>
        <begin position="1"/>
        <end position="182"/>
    </location>
</feature>
<feature type="domain" description="Nudix hydrolase">
    <location>
        <begin position="30"/>
        <end position="164"/>
    </location>
</feature>
<feature type="active site" evidence="1">
    <location>
        <position position="67"/>
    </location>
</feature>
<feature type="active site" evidence="1">
    <location>
        <position position="116"/>
    </location>
</feature>
<feature type="binding site" evidence="1">
    <location>
        <position position="25"/>
    </location>
    <ligand>
        <name>Mn(2+)</name>
        <dbReference type="ChEBI" id="CHEBI:29035"/>
    </ligand>
</feature>
<feature type="binding site" evidence="1">
    <location>
        <position position="32"/>
    </location>
    <ligand>
        <name>Mn(2+)</name>
        <dbReference type="ChEBI" id="CHEBI:29035"/>
    </ligand>
</feature>
<feature type="binding site" evidence="1">
    <location>
        <position position="69"/>
    </location>
    <ligand>
        <name>Mn(2+)</name>
        <dbReference type="ChEBI" id="CHEBI:29035"/>
    </ligand>
</feature>
<feature type="binding site" evidence="1">
    <location>
        <position position="87"/>
    </location>
    <ligand>
        <name>Mg(2+)</name>
        <dbReference type="ChEBI" id="CHEBI:18420"/>
    </ligand>
</feature>
<feature type="binding site" evidence="1">
    <location>
        <position position="114"/>
    </location>
    <ligand>
        <name>Mn(2+)</name>
        <dbReference type="ChEBI" id="CHEBI:29035"/>
    </ligand>
</feature>
<feature type="binding site" evidence="1">
    <location>
        <position position="116"/>
    </location>
    <ligand>
        <name>Mn(2+)</name>
        <dbReference type="ChEBI" id="CHEBI:29035"/>
    </ligand>
</feature>
<organism>
    <name type="scientific">Escherichia coli O1:K1 / APEC</name>
    <dbReference type="NCBI Taxonomy" id="405955"/>
    <lineage>
        <taxon>Bacteria</taxon>
        <taxon>Pseudomonadati</taxon>
        <taxon>Pseudomonadota</taxon>
        <taxon>Gammaproteobacteria</taxon>
        <taxon>Enterobacterales</taxon>
        <taxon>Enterobacteriaceae</taxon>
        <taxon>Escherichia</taxon>
    </lineage>
</organism>
<gene>
    <name evidence="1" type="primary">idi</name>
    <name type="ordered locus">Ecok1_28250</name>
    <name type="ORF">APECO1_3638</name>
</gene>
<proteinExistence type="inferred from homology"/>
<accession>A1AF79</accession>
<dbReference type="EC" id="5.3.3.2" evidence="1"/>
<dbReference type="EMBL" id="CP000468">
    <property type="protein sequence ID" value="ABJ02319.1"/>
    <property type="molecule type" value="Genomic_DNA"/>
</dbReference>
<dbReference type="RefSeq" id="WP_001192798.1">
    <property type="nucleotide sequence ID" value="NZ_CADILS010000010.1"/>
</dbReference>
<dbReference type="SMR" id="A1AF79"/>
<dbReference type="KEGG" id="ecv:APECO1_3638"/>
<dbReference type="HOGENOM" id="CLU_060552_2_0_6"/>
<dbReference type="UniPathway" id="UPA00059">
    <property type="reaction ID" value="UER00104"/>
</dbReference>
<dbReference type="Proteomes" id="UP000008216">
    <property type="component" value="Chromosome"/>
</dbReference>
<dbReference type="GO" id="GO:0005737">
    <property type="term" value="C:cytoplasm"/>
    <property type="evidence" value="ECO:0007669"/>
    <property type="project" value="UniProtKB-SubCell"/>
</dbReference>
<dbReference type="GO" id="GO:0004452">
    <property type="term" value="F:isopentenyl-diphosphate delta-isomerase activity"/>
    <property type="evidence" value="ECO:0007669"/>
    <property type="project" value="UniProtKB-UniRule"/>
</dbReference>
<dbReference type="GO" id="GO:0046872">
    <property type="term" value="F:metal ion binding"/>
    <property type="evidence" value="ECO:0007669"/>
    <property type="project" value="UniProtKB-KW"/>
</dbReference>
<dbReference type="GO" id="GO:0050992">
    <property type="term" value="P:dimethylallyl diphosphate biosynthetic process"/>
    <property type="evidence" value="ECO:0007669"/>
    <property type="project" value="UniProtKB-UniRule"/>
</dbReference>
<dbReference type="GO" id="GO:0008299">
    <property type="term" value="P:isoprenoid biosynthetic process"/>
    <property type="evidence" value="ECO:0007669"/>
    <property type="project" value="UniProtKB-KW"/>
</dbReference>
<dbReference type="CDD" id="cd02885">
    <property type="entry name" value="NUDIX_IPP_Isomerase"/>
    <property type="match status" value="1"/>
</dbReference>
<dbReference type="FunFam" id="3.90.79.10:FF:000009">
    <property type="entry name" value="Isopentenyl-diphosphate Delta-isomerase"/>
    <property type="match status" value="1"/>
</dbReference>
<dbReference type="Gene3D" id="3.90.79.10">
    <property type="entry name" value="Nucleoside Triphosphate Pyrophosphohydrolase"/>
    <property type="match status" value="1"/>
</dbReference>
<dbReference type="HAMAP" id="MF_00202">
    <property type="entry name" value="Idi"/>
    <property type="match status" value="1"/>
</dbReference>
<dbReference type="InterPro" id="IPR056375">
    <property type="entry name" value="Idi_bact"/>
</dbReference>
<dbReference type="InterPro" id="IPR011876">
    <property type="entry name" value="IsopentenylPP_isomerase_typ1"/>
</dbReference>
<dbReference type="InterPro" id="IPR015797">
    <property type="entry name" value="NUDIX_hydrolase-like_dom_sf"/>
</dbReference>
<dbReference type="InterPro" id="IPR000086">
    <property type="entry name" value="NUDIX_hydrolase_dom"/>
</dbReference>
<dbReference type="NCBIfam" id="TIGR02150">
    <property type="entry name" value="IPP_isom_1"/>
    <property type="match status" value="1"/>
</dbReference>
<dbReference type="NCBIfam" id="NF002995">
    <property type="entry name" value="PRK03759.1"/>
    <property type="match status" value="1"/>
</dbReference>
<dbReference type="PANTHER" id="PTHR10885">
    <property type="entry name" value="ISOPENTENYL-DIPHOSPHATE DELTA-ISOMERASE"/>
    <property type="match status" value="1"/>
</dbReference>
<dbReference type="PANTHER" id="PTHR10885:SF0">
    <property type="entry name" value="ISOPENTENYL-DIPHOSPHATE DELTA-ISOMERASE"/>
    <property type="match status" value="1"/>
</dbReference>
<dbReference type="Pfam" id="PF00293">
    <property type="entry name" value="NUDIX"/>
    <property type="match status" value="1"/>
</dbReference>
<dbReference type="PIRSF" id="PIRSF018427">
    <property type="entry name" value="Isopntndiph_ism"/>
    <property type="match status" value="1"/>
</dbReference>
<dbReference type="SUPFAM" id="SSF55811">
    <property type="entry name" value="Nudix"/>
    <property type="match status" value="1"/>
</dbReference>
<dbReference type="PROSITE" id="PS51462">
    <property type="entry name" value="NUDIX"/>
    <property type="match status" value="1"/>
</dbReference>
<evidence type="ECO:0000255" key="1">
    <source>
        <dbReference type="HAMAP-Rule" id="MF_00202"/>
    </source>
</evidence>
<comment type="function">
    <text evidence="1">Catalyzes the 1,3-allylic rearrangement of the homoallylic substrate isopentenyl (IPP) to its highly electrophilic allylic isomer, dimethylallyl diphosphate (DMAPP).</text>
</comment>
<comment type="catalytic activity">
    <reaction evidence="1">
        <text>isopentenyl diphosphate = dimethylallyl diphosphate</text>
        <dbReference type="Rhea" id="RHEA:23284"/>
        <dbReference type="ChEBI" id="CHEBI:57623"/>
        <dbReference type="ChEBI" id="CHEBI:128769"/>
        <dbReference type="EC" id="5.3.3.2"/>
    </reaction>
</comment>
<comment type="cofactor">
    <cofactor evidence="1">
        <name>Mg(2+)</name>
        <dbReference type="ChEBI" id="CHEBI:18420"/>
    </cofactor>
    <text evidence="1">Binds 1 Mg(2+) ion per subunit. The magnesium ion binds only when substrate is bound.</text>
</comment>
<comment type="cofactor">
    <cofactor evidence="1">
        <name>Mn(2+)</name>
        <dbReference type="ChEBI" id="CHEBI:29035"/>
    </cofactor>
    <text evidence="1">Binds 1 Mn(2+) ion per subunit.</text>
</comment>
<comment type="pathway">
    <text evidence="1">Isoprenoid biosynthesis; dimethylallyl diphosphate biosynthesis; dimethylallyl diphosphate from isopentenyl diphosphate: step 1/1.</text>
</comment>
<comment type="subunit">
    <text evidence="1">Homodimer.</text>
</comment>
<comment type="subcellular location">
    <subcellularLocation>
        <location evidence="1">Cytoplasm</location>
    </subcellularLocation>
</comment>
<comment type="similarity">
    <text evidence="1">Belongs to the IPP isomerase type 1 family.</text>
</comment>